<evidence type="ECO:0000255" key="1">
    <source>
        <dbReference type="HAMAP-Rule" id="MF_00600"/>
    </source>
</evidence>
<gene>
    <name evidence="1" type="primary">groEL</name>
    <name evidence="1" type="synonym">groL</name>
    <name type="ordered locus">SSON_4326</name>
</gene>
<feature type="chain" id="PRO_0000256987" description="Chaperonin GroEL">
    <location>
        <begin position="1"/>
        <end position="548"/>
    </location>
</feature>
<feature type="binding site" evidence="1">
    <location>
        <begin position="30"/>
        <end position="33"/>
    </location>
    <ligand>
        <name>ATP</name>
        <dbReference type="ChEBI" id="CHEBI:30616"/>
    </ligand>
</feature>
<feature type="binding site" evidence="1">
    <location>
        <position position="51"/>
    </location>
    <ligand>
        <name>ATP</name>
        <dbReference type="ChEBI" id="CHEBI:30616"/>
    </ligand>
</feature>
<feature type="binding site" evidence="1">
    <location>
        <begin position="87"/>
        <end position="91"/>
    </location>
    <ligand>
        <name>ATP</name>
        <dbReference type="ChEBI" id="CHEBI:30616"/>
    </ligand>
</feature>
<feature type="binding site" evidence="1">
    <location>
        <position position="415"/>
    </location>
    <ligand>
        <name>ATP</name>
        <dbReference type="ChEBI" id="CHEBI:30616"/>
    </ligand>
</feature>
<feature type="binding site" evidence="1">
    <location>
        <begin position="479"/>
        <end position="481"/>
    </location>
    <ligand>
        <name>ATP</name>
        <dbReference type="ChEBI" id="CHEBI:30616"/>
    </ligand>
</feature>
<feature type="binding site" evidence="1">
    <location>
        <position position="495"/>
    </location>
    <ligand>
        <name>ATP</name>
        <dbReference type="ChEBI" id="CHEBI:30616"/>
    </ligand>
</feature>
<protein>
    <recommendedName>
        <fullName evidence="1">Chaperonin GroEL</fullName>
        <ecNumber evidence="1">5.6.1.7</ecNumber>
    </recommendedName>
    <alternativeName>
        <fullName evidence="1">60 kDa chaperonin</fullName>
    </alternativeName>
    <alternativeName>
        <fullName evidence="1">Chaperonin-60</fullName>
        <shortName evidence="1">Cpn60</shortName>
    </alternativeName>
</protein>
<comment type="function">
    <text evidence="1">Together with its co-chaperonin GroES, plays an essential role in assisting protein folding. The GroEL-GroES system forms a nano-cage that allows encapsulation of the non-native substrate proteins and provides a physical environment optimized to promote and accelerate protein folding.</text>
</comment>
<comment type="catalytic activity">
    <reaction evidence="1">
        <text>ATP + H2O + a folded polypeptide = ADP + phosphate + an unfolded polypeptide.</text>
        <dbReference type="EC" id="5.6.1.7"/>
    </reaction>
</comment>
<comment type="subunit">
    <text evidence="1">Forms a cylinder of 14 subunits composed of two heptameric rings stacked back-to-back. Interacts with the co-chaperonin GroES.</text>
</comment>
<comment type="subcellular location">
    <subcellularLocation>
        <location evidence="1">Cytoplasm</location>
    </subcellularLocation>
</comment>
<comment type="similarity">
    <text evidence="1">Belongs to the chaperonin (HSP60) family.</text>
</comment>
<sequence>MAAKDVKFGNDARVKMLRGVNVLADAVKVTLGPKGRNVVLDKSFGAPTITKDGVSVAREIELEDKFENMGAQMVKEVASKANDAAGDGTTTATVLAQAIITEGLKAVAAGMNPMDLKRGIDKAVTAAVEELKALSVPCSDSKAIAQVGTISANSDETVGKLIAEAMDKVGKEGVITVEDGTGLQDELDVVEGMQFDRGYLSPYFINKPETGAVELESPFILLADKKISNIREMLPVLEAVAKAGKPLLIIAEDVEGEALATLVVNTMRGIVKVAAVKAPGFGDRRKAMLQDIATLTGGTVISEEIGMELEKATLEDLGQAKRVVINKDTTTIIDGVGEEAAIQGRVAQIRQQIEEATSDYDREKLQERVAKLAGGVAVIKVGAATEVEMKEKKARVEDALHATRAAVEEGVVAGGGVALIRVASKLADLRGQNEDQNVGIKVALRAMEAPLRQIVLNCGEEPSVVANTVKGGDGNYGYNAATEEYGNMIDMGILDPTKVTRSALQYAASVAGLMITTECMVTDLPKNDAADLGAAGGMGGMGGMGGMM</sequence>
<accession>Q3YUJ7</accession>
<organism>
    <name type="scientific">Shigella sonnei (strain Ss046)</name>
    <dbReference type="NCBI Taxonomy" id="300269"/>
    <lineage>
        <taxon>Bacteria</taxon>
        <taxon>Pseudomonadati</taxon>
        <taxon>Pseudomonadota</taxon>
        <taxon>Gammaproteobacteria</taxon>
        <taxon>Enterobacterales</taxon>
        <taxon>Enterobacteriaceae</taxon>
        <taxon>Shigella</taxon>
    </lineage>
</organism>
<proteinExistence type="inferred from homology"/>
<dbReference type="EC" id="5.6.1.7" evidence="1"/>
<dbReference type="EMBL" id="CP000038">
    <property type="protein sequence ID" value="AAZ90815.1"/>
    <property type="molecule type" value="Genomic_DNA"/>
</dbReference>
<dbReference type="RefSeq" id="WP_000729117.1">
    <property type="nucleotide sequence ID" value="NC_007384.1"/>
</dbReference>
<dbReference type="SMR" id="Q3YUJ7"/>
<dbReference type="GeneID" id="93777681"/>
<dbReference type="KEGG" id="ssn:SSON_4326"/>
<dbReference type="HOGENOM" id="CLU_016503_3_0_6"/>
<dbReference type="Proteomes" id="UP000002529">
    <property type="component" value="Chromosome"/>
</dbReference>
<dbReference type="GO" id="GO:0005737">
    <property type="term" value="C:cytoplasm"/>
    <property type="evidence" value="ECO:0007669"/>
    <property type="project" value="UniProtKB-SubCell"/>
</dbReference>
<dbReference type="GO" id="GO:0005524">
    <property type="term" value="F:ATP binding"/>
    <property type="evidence" value="ECO:0007669"/>
    <property type="project" value="UniProtKB-UniRule"/>
</dbReference>
<dbReference type="GO" id="GO:0140662">
    <property type="term" value="F:ATP-dependent protein folding chaperone"/>
    <property type="evidence" value="ECO:0007669"/>
    <property type="project" value="InterPro"/>
</dbReference>
<dbReference type="GO" id="GO:0016853">
    <property type="term" value="F:isomerase activity"/>
    <property type="evidence" value="ECO:0007669"/>
    <property type="project" value="UniProtKB-KW"/>
</dbReference>
<dbReference type="GO" id="GO:0051082">
    <property type="term" value="F:unfolded protein binding"/>
    <property type="evidence" value="ECO:0007669"/>
    <property type="project" value="UniProtKB-UniRule"/>
</dbReference>
<dbReference type="GO" id="GO:0042026">
    <property type="term" value="P:protein refolding"/>
    <property type="evidence" value="ECO:0007669"/>
    <property type="project" value="UniProtKB-UniRule"/>
</dbReference>
<dbReference type="CDD" id="cd03344">
    <property type="entry name" value="GroEL"/>
    <property type="match status" value="1"/>
</dbReference>
<dbReference type="FunFam" id="1.10.560.10:FF:000001">
    <property type="entry name" value="60 kDa chaperonin"/>
    <property type="match status" value="1"/>
</dbReference>
<dbReference type="FunFam" id="3.50.7.10:FF:000001">
    <property type="entry name" value="60 kDa chaperonin"/>
    <property type="match status" value="1"/>
</dbReference>
<dbReference type="Gene3D" id="3.50.7.10">
    <property type="entry name" value="GroEL"/>
    <property type="match status" value="1"/>
</dbReference>
<dbReference type="Gene3D" id="1.10.560.10">
    <property type="entry name" value="GroEL-like equatorial domain"/>
    <property type="match status" value="1"/>
</dbReference>
<dbReference type="Gene3D" id="3.30.260.10">
    <property type="entry name" value="TCP-1-like chaperonin intermediate domain"/>
    <property type="match status" value="1"/>
</dbReference>
<dbReference type="HAMAP" id="MF_00600">
    <property type="entry name" value="CH60"/>
    <property type="match status" value="1"/>
</dbReference>
<dbReference type="InterPro" id="IPR018370">
    <property type="entry name" value="Chaperonin_Cpn60_CS"/>
</dbReference>
<dbReference type="InterPro" id="IPR001844">
    <property type="entry name" value="Cpn60/GroEL"/>
</dbReference>
<dbReference type="InterPro" id="IPR002423">
    <property type="entry name" value="Cpn60/GroEL/TCP-1"/>
</dbReference>
<dbReference type="InterPro" id="IPR027409">
    <property type="entry name" value="GroEL-like_apical_dom_sf"/>
</dbReference>
<dbReference type="InterPro" id="IPR027413">
    <property type="entry name" value="GROEL-like_equatorial_sf"/>
</dbReference>
<dbReference type="InterPro" id="IPR027410">
    <property type="entry name" value="TCP-1-like_intermed_sf"/>
</dbReference>
<dbReference type="NCBIfam" id="TIGR02348">
    <property type="entry name" value="GroEL"/>
    <property type="match status" value="1"/>
</dbReference>
<dbReference type="NCBIfam" id="NF000592">
    <property type="entry name" value="PRK00013.1"/>
    <property type="match status" value="1"/>
</dbReference>
<dbReference type="NCBIfam" id="NF009487">
    <property type="entry name" value="PRK12849.1"/>
    <property type="match status" value="1"/>
</dbReference>
<dbReference type="NCBIfam" id="NF009488">
    <property type="entry name" value="PRK12850.1"/>
    <property type="match status" value="1"/>
</dbReference>
<dbReference type="NCBIfam" id="NF009489">
    <property type="entry name" value="PRK12851.1"/>
    <property type="match status" value="1"/>
</dbReference>
<dbReference type="PANTHER" id="PTHR45633">
    <property type="entry name" value="60 KDA HEAT SHOCK PROTEIN, MITOCHONDRIAL"/>
    <property type="match status" value="1"/>
</dbReference>
<dbReference type="Pfam" id="PF00118">
    <property type="entry name" value="Cpn60_TCP1"/>
    <property type="match status" value="1"/>
</dbReference>
<dbReference type="PRINTS" id="PR00298">
    <property type="entry name" value="CHAPERONIN60"/>
</dbReference>
<dbReference type="SUPFAM" id="SSF52029">
    <property type="entry name" value="GroEL apical domain-like"/>
    <property type="match status" value="1"/>
</dbReference>
<dbReference type="SUPFAM" id="SSF48592">
    <property type="entry name" value="GroEL equatorial domain-like"/>
    <property type="match status" value="1"/>
</dbReference>
<dbReference type="SUPFAM" id="SSF54849">
    <property type="entry name" value="GroEL-intermediate domain like"/>
    <property type="match status" value="1"/>
</dbReference>
<dbReference type="PROSITE" id="PS00296">
    <property type="entry name" value="CHAPERONINS_CPN60"/>
    <property type="match status" value="1"/>
</dbReference>
<name>CH60_SHISS</name>
<keyword id="KW-0067">ATP-binding</keyword>
<keyword id="KW-0143">Chaperone</keyword>
<keyword id="KW-0963">Cytoplasm</keyword>
<keyword id="KW-0413">Isomerase</keyword>
<keyword id="KW-0547">Nucleotide-binding</keyword>
<keyword id="KW-1185">Reference proteome</keyword>
<reference key="1">
    <citation type="journal article" date="2005" name="Nucleic Acids Res.">
        <title>Genome dynamics and diversity of Shigella species, the etiologic agents of bacillary dysentery.</title>
        <authorList>
            <person name="Yang F."/>
            <person name="Yang J."/>
            <person name="Zhang X."/>
            <person name="Chen L."/>
            <person name="Jiang Y."/>
            <person name="Yan Y."/>
            <person name="Tang X."/>
            <person name="Wang J."/>
            <person name="Xiong Z."/>
            <person name="Dong J."/>
            <person name="Xue Y."/>
            <person name="Zhu Y."/>
            <person name="Xu X."/>
            <person name="Sun L."/>
            <person name="Chen S."/>
            <person name="Nie H."/>
            <person name="Peng J."/>
            <person name="Xu J."/>
            <person name="Wang Y."/>
            <person name="Yuan Z."/>
            <person name="Wen Y."/>
            <person name="Yao Z."/>
            <person name="Shen Y."/>
            <person name="Qiang B."/>
            <person name="Hou Y."/>
            <person name="Yu J."/>
            <person name="Jin Q."/>
        </authorList>
    </citation>
    <scope>NUCLEOTIDE SEQUENCE [LARGE SCALE GENOMIC DNA]</scope>
    <source>
        <strain>Ss046</strain>
    </source>
</reference>